<gene>
    <name type="primary">BDNF</name>
</gene>
<feature type="signal peptide" evidence="3">
    <location>
        <begin position="1"/>
        <end position="18"/>
    </location>
</feature>
<feature type="chain" id="PRO_0000447537" description="Neurotrophic factor BDNF precursor form">
    <location>
        <begin position="19"/>
        <end position="247"/>
    </location>
</feature>
<feature type="propeptide" id="PRO_0000019637" evidence="1">
    <location>
        <begin position="19"/>
        <end position="128"/>
    </location>
</feature>
<feature type="chain" id="PRO_0000019638" description="Neurotrophic factor BDNF">
    <location>
        <begin position="129"/>
        <end position="247"/>
    </location>
</feature>
<feature type="site" description="Cleavage; by MBTPS1" evidence="2">
    <location>
        <begin position="57"/>
        <end position="58"/>
    </location>
</feature>
<feature type="glycosylation site" description="N-linked (GlcNAc...) asparagine" evidence="3">
    <location>
        <position position="121"/>
    </location>
</feature>
<feature type="disulfide bond" evidence="2">
    <location>
        <begin position="141"/>
        <end position="208"/>
    </location>
</feature>
<feature type="disulfide bond" evidence="2">
    <location>
        <begin position="186"/>
        <end position="237"/>
    </location>
</feature>
<feature type="disulfide bond" evidence="2">
    <location>
        <begin position="196"/>
        <end position="239"/>
    </location>
</feature>
<comment type="function">
    <text evidence="1 2">Important signaling molecule that activates signaling cascades downstream of NTRK2 (By similarity). During development, promotes the survival and differentiation of selected neuronal populations of the peripheral and central nervous systems. Participates in axonal growth, pathfinding and in the modulation of dendritic growth and morphology. Major regulator of synaptic transmission and plasticity at adult synapses in many regions of the CNS. The versatility of BDNF is emphasized by its contribution to a range of adaptive neuronal responses including long-term potentiation (LTP), long-term depression (LTD), certain forms of short-term synaptic plasticity, as well as homeostatic regulation of intrinsic neuronal excitability (By similarity).</text>
</comment>
<comment type="function">
    <molecule>Neurotrophic factor BDNF precursor form</molecule>
    <text evidence="1">Important signaling molecule that activates signaling cascades downstream of NTRK2. Activates signaling cascades via the heterodimeric receptor formed by NGFR and SORCS2. Signaling via NGFR and SORCS2 plays a role in synaptic plasticity and long-term depression (LTD). Binding to NGFR and SORCS2 promotes neuronal apoptosis. Promotes neuronal growth cone collapse.</text>
</comment>
<comment type="subunit">
    <text evidence="1 2">Monomers and homodimers (By similarity). Binds to NTRK2/TRKB. Can form heterodimers with other neurotrophin family members, such as NTF3 and NTF4 (in vitro), but the physiological relevance of this is not clear (By similarity). BDNF precursor form: interacts with the heterodimer formed by NGFR and SORCS2. Mature BDNF has much lower affinity for the heterodimer formed by NGFR and SORCS2 (By similarity).</text>
</comment>
<comment type="subcellular location">
    <subcellularLocation>
        <location evidence="2">Secreted</location>
    </subcellularLocation>
</comment>
<comment type="subcellular location">
    <molecule>Neurotrophic factor BDNF precursor form</molecule>
    <subcellularLocation>
        <location evidence="2">Secreted</location>
    </subcellularLocation>
    <text evidence="2">A proportion of BDNF is secreted as immature precursor (proBDNF).</text>
</comment>
<comment type="PTM">
    <molecule>Neurotrophic factor BDNF precursor form</molecule>
    <text evidence="2">N-glycosylated and glycosulfated, contrary to mature BDNF.</text>
</comment>
<comment type="PTM">
    <text evidence="2">Mature BDNF is produced by proteolytic removal of the propeptide, catalyzed by a FURIN family member. In addition, the precursor form is proteolytically cleaved within the propeptide, but this is not an obligatory intermediate for the production of mature BDNF. Can be converted into mature BDNF by plasmin (PLG).</text>
</comment>
<comment type="similarity">
    <text evidence="4">Belongs to the NGF-beta family.</text>
</comment>
<sequence length="247" mass="27818">MTILFLTMVISYFGCMKAAPMKEANIRGQGGLAYPGVRTHGTLESVNGPKAGSRGLTSLADTFEHVIEELLDEDQKVRPNEENNKDADLYTSRVMLSSQVPLEPPLLFLLEEYKNYLDAANMSMRVRRHSDPARRGELSVCDSISEWVTAADKKTAVDMSGGTVTVLEKVPVSKGQLKQYFYETKCNPMGYTKEGCRGIDKRHWNSQCRTTQSYVRALTMDSKKRIGWRFIRIDTSCVCTLTIKRGR</sequence>
<proteinExistence type="evidence at transcript level"/>
<evidence type="ECO:0000250" key="1">
    <source>
        <dbReference type="UniProtKB" id="P21237"/>
    </source>
</evidence>
<evidence type="ECO:0000250" key="2">
    <source>
        <dbReference type="UniProtKB" id="P23560"/>
    </source>
</evidence>
<evidence type="ECO:0000255" key="3"/>
<evidence type="ECO:0000305" key="4"/>
<reference key="1">
    <citation type="journal article" date="2004" name="Cell">
        <title>Accelerated evolution of nervous system genes in the origin of Homo sapiens.</title>
        <authorList>
            <person name="Dorus S."/>
            <person name="Vallender E.J."/>
            <person name="Evans P.D."/>
            <person name="Anderson J.R."/>
            <person name="Gilbert S.L."/>
            <person name="Mahowald M."/>
            <person name="Wyckoff G.J."/>
            <person name="Malcom C.M."/>
            <person name="Lahn B.T."/>
        </authorList>
    </citation>
    <scope>NUCLEOTIDE SEQUENCE [MRNA]</scope>
</reference>
<accession>Q5IS78</accession>
<keyword id="KW-0165">Cleavage on pair of basic residues</keyword>
<keyword id="KW-1015">Disulfide bond</keyword>
<keyword id="KW-0325">Glycoprotein</keyword>
<keyword id="KW-0339">Growth factor</keyword>
<keyword id="KW-1185">Reference proteome</keyword>
<keyword id="KW-0964">Secreted</keyword>
<keyword id="KW-0732">Signal</keyword>
<dbReference type="EMBL" id="AY665250">
    <property type="protein sequence ID" value="AAV74288.1"/>
    <property type="molecule type" value="mRNA"/>
</dbReference>
<dbReference type="RefSeq" id="NP_001012443.1">
    <property type="nucleotide sequence ID" value="NM_001012441.1"/>
</dbReference>
<dbReference type="BMRB" id="Q5IS78"/>
<dbReference type="SMR" id="Q5IS78"/>
<dbReference type="FunCoup" id="Q5IS78">
    <property type="interactions" value="1095"/>
</dbReference>
<dbReference type="STRING" id="9598.ENSPTRP00000060385"/>
<dbReference type="GlyCosmos" id="Q5IS78">
    <property type="glycosylation" value="1 site, No reported glycans"/>
</dbReference>
<dbReference type="PaxDb" id="9598-ENSPTRP00000054632"/>
<dbReference type="GeneID" id="503511"/>
<dbReference type="KEGG" id="ptr:503511"/>
<dbReference type="CTD" id="627"/>
<dbReference type="eggNOG" id="ENOG502QRU8">
    <property type="taxonomic scope" value="Eukaryota"/>
</dbReference>
<dbReference type="HOGENOM" id="CLU_059942_0_0_1"/>
<dbReference type="InParanoid" id="Q5IS78"/>
<dbReference type="OrthoDB" id="1890at9604"/>
<dbReference type="TreeFam" id="TF106463"/>
<dbReference type="Proteomes" id="UP000002277">
    <property type="component" value="Unplaced"/>
</dbReference>
<dbReference type="GO" id="GO:0030424">
    <property type="term" value="C:axon"/>
    <property type="evidence" value="ECO:0000318"/>
    <property type="project" value="GO_Central"/>
</dbReference>
<dbReference type="GO" id="GO:0005737">
    <property type="term" value="C:cytoplasm"/>
    <property type="evidence" value="ECO:0000250"/>
    <property type="project" value="UniProtKB"/>
</dbReference>
<dbReference type="GO" id="GO:0030425">
    <property type="term" value="C:dendrite"/>
    <property type="evidence" value="ECO:0000318"/>
    <property type="project" value="GO_Central"/>
</dbReference>
<dbReference type="GO" id="GO:0005615">
    <property type="term" value="C:extracellular space"/>
    <property type="evidence" value="ECO:0000318"/>
    <property type="project" value="GO_Central"/>
</dbReference>
<dbReference type="GO" id="GO:0048471">
    <property type="term" value="C:perinuclear region of cytoplasm"/>
    <property type="evidence" value="ECO:0000250"/>
    <property type="project" value="UniProtKB"/>
</dbReference>
<dbReference type="GO" id="GO:0008021">
    <property type="term" value="C:synaptic vesicle"/>
    <property type="evidence" value="ECO:0000318"/>
    <property type="project" value="GO_Central"/>
</dbReference>
<dbReference type="GO" id="GO:0008083">
    <property type="term" value="F:growth factor activity"/>
    <property type="evidence" value="ECO:0000318"/>
    <property type="project" value="GO_Central"/>
</dbReference>
<dbReference type="GO" id="GO:0005163">
    <property type="term" value="F:nerve growth factor receptor binding"/>
    <property type="evidence" value="ECO:0000318"/>
    <property type="project" value="GO_Central"/>
</dbReference>
<dbReference type="GO" id="GO:0007169">
    <property type="term" value="P:cell surface receptor protein tyrosine kinase signaling pathway"/>
    <property type="evidence" value="ECO:0000318"/>
    <property type="project" value="GO_Central"/>
</dbReference>
<dbReference type="GO" id="GO:0050804">
    <property type="term" value="P:modulation of chemical synaptic transmission"/>
    <property type="evidence" value="ECO:0000318"/>
    <property type="project" value="GO_Central"/>
</dbReference>
<dbReference type="GO" id="GO:0043524">
    <property type="term" value="P:negative regulation of neuron apoptotic process"/>
    <property type="evidence" value="ECO:0000318"/>
    <property type="project" value="GO_Central"/>
</dbReference>
<dbReference type="GO" id="GO:0021675">
    <property type="term" value="P:nerve development"/>
    <property type="evidence" value="ECO:0000318"/>
    <property type="project" value="GO_Central"/>
</dbReference>
<dbReference type="GO" id="GO:0038180">
    <property type="term" value="P:nerve growth factor signaling pathway"/>
    <property type="evidence" value="ECO:0000318"/>
    <property type="project" value="GO_Central"/>
</dbReference>
<dbReference type="GO" id="GO:0048812">
    <property type="term" value="P:neuron projection morphogenesis"/>
    <property type="evidence" value="ECO:0000318"/>
    <property type="project" value="GO_Central"/>
</dbReference>
<dbReference type="FunFam" id="2.10.90.10:FF:000002">
    <property type="entry name" value="Brain-derived neurotrophic factor"/>
    <property type="match status" value="1"/>
</dbReference>
<dbReference type="Gene3D" id="2.10.90.10">
    <property type="entry name" value="Cystine-knot cytokines"/>
    <property type="match status" value="1"/>
</dbReference>
<dbReference type="InterPro" id="IPR020430">
    <property type="entry name" value="Brain-der_neurotrophic_factor"/>
</dbReference>
<dbReference type="InterPro" id="IPR029034">
    <property type="entry name" value="Cystine-knot_cytokine"/>
</dbReference>
<dbReference type="InterPro" id="IPR020408">
    <property type="entry name" value="Nerve_growth_factor-like"/>
</dbReference>
<dbReference type="InterPro" id="IPR002072">
    <property type="entry name" value="Nerve_growth_factor-rel"/>
</dbReference>
<dbReference type="InterPro" id="IPR019846">
    <property type="entry name" value="Nerve_growth_factor_CS"/>
</dbReference>
<dbReference type="PANTHER" id="PTHR11589:SF3">
    <property type="entry name" value="BRAIN-DERIVED NEUROTROPHIC FACTOR"/>
    <property type="match status" value="1"/>
</dbReference>
<dbReference type="PANTHER" id="PTHR11589">
    <property type="entry name" value="NERVE GROWTH FACTOR NGF -RELATED"/>
    <property type="match status" value="1"/>
</dbReference>
<dbReference type="Pfam" id="PF00243">
    <property type="entry name" value="NGF"/>
    <property type="match status" value="1"/>
</dbReference>
<dbReference type="PIRSF" id="PIRSF001789">
    <property type="entry name" value="NGF"/>
    <property type="match status" value="1"/>
</dbReference>
<dbReference type="PRINTS" id="PR01912">
    <property type="entry name" value="BDNFACTOR"/>
</dbReference>
<dbReference type="PRINTS" id="PR00268">
    <property type="entry name" value="NGF"/>
</dbReference>
<dbReference type="SMART" id="SM00140">
    <property type="entry name" value="NGF"/>
    <property type="match status" value="1"/>
</dbReference>
<dbReference type="SUPFAM" id="SSF57501">
    <property type="entry name" value="Cystine-knot cytokines"/>
    <property type="match status" value="1"/>
</dbReference>
<dbReference type="PROSITE" id="PS00248">
    <property type="entry name" value="NGF_1"/>
    <property type="match status" value="1"/>
</dbReference>
<dbReference type="PROSITE" id="PS50270">
    <property type="entry name" value="NGF_2"/>
    <property type="match status" value="1"/>
</dbReference>
<organism>
    <name type="scientific">Pan troglodytes</name>
    <name type="common">Chimpanzee</name>
    <dbReference type="NCBI Taxonomy" id="9598"/>
    <lineage>
        <taxon>Eukaryota</taxon>
        <taxon>Metazoa</taxon>
        <taxon>Chordata</taxon>
        <taxon>Craniata</taxon>
        <taxon>Vertebrata</taxon>
        <taxon>Euteleostomi</taxon>
        <taxon>Mammalia</taxon>
        <taxon>Eutheria</taxon>
        <taxon>Euarchontoglires</taxon>
        <taxon>Primates</taxon>
        <taxon>Haplorrhini</taxon>
        <taxon>Catarrhini</taxon>
        <taxon>Hominidae</taxon>
        <taxon>Pan</taxon>
    </lineage>
</organism>
<name>BDNF_PANTR</name>
<protein>
    <recommendedName>
        <fullName evidence="4">Neurotrophic factor BDNF precursor form</fullName>
        <shortName>proBDNF</shortName>
    </recommendedName>
    <alternativeName>
        <fullName>Brain-derived neurotrophic factor</fullName>
    </alternativeName>
    <component>
        <recommendedName>
            <fullName>Neurotrophic factor BDNF</fullName>
        </recommendedName>
    </component>
</protein>